<protein>
    <recommendedName>
        <fullName evidence="1">UPF0434 protein PputGB1_1477</fullName>
    </recommendedName>
</protein>
<feature type="chain" id="PRO_1000085460" description="UPF0434 protein PputGB1_1477">
    <location>
        <begin position="1"/>
        <end position="61"/>
    </location>
</feature>
<evidence type="ECO:0000255" key="1">
    <source>
        <dbReference type="HAMAP-Rule" id="MF_01187"/>
    </source>
</evidence>
<name>Y1477_PSEPG</name>
<reference key="1">
    <citation type="submission" date="2008-01" db="EMBL/GenBank/DDBJ databases">
        <title>Complete sequence of Pseudomonas putida GB-1.</title>
        <authorList>
            <consortium name="US DOE Joint Genome Institute"/>
            <person name="Copeland A."/>
            <person name="Lucas S."/>
            <person name="Lapidus A."/>
            <person name="Barry K."/>
            <person name="Glavina del Rio T."/>
            <person name="Dalin E."/>
            <person name="Tice H."/>
            <person name="Pitluck S."/>
            <person name="Bruce D."/>
            <person name="Goodwin L."/>
            <person name="Chertkov O."/>
            <person name="Brettin T."/>
            <person name="Detter J.C."/>
            <person name="Han C."/>
            <person name="Kuske C.R."/>
            <person name="Schmutz J."/>
            <person name="Larimer F."/>
            <person name="Land M."/>
            <person name="Hauser L."/>
            <person name="Kyrpides N."/>
            <person name="Kim E."/>
            <person name="McCarthy J.K."/>
            <person name="Richardson P."/>
        </authorList>
    </citation>
    <scope>NUCLEOTIDE SEQUENCE [LARGE SCALE GENOMIC DNA]</scope>
    <source>
        <strain>GB-1</strain>
    </source>
</reference>
<dbReference type="EMBL" id="CP000926">
    <property type="protein sequence ID" value="ABY97382.1"/>
    <property type="molecule type" value="Genomic_DNA"/>
</dbReference>
<dbReference type="RefSeq" id="WP_003247142.1">
    <property type="nucleotide sequence ID" value="NC_010322.1"/>
</dbReference>
<dbReference type="SMR" id="B0KF42"/>
<dbReference type="KEGG" id="ppg:PputGB1_1477"/>
<dbReference type="eggNOG" id="COG2835">
    <property type="taxonomic scope" value="Bacteria"/>
</dbReference>
<dbReference type="HOGENOM" id="CLU_155659_3_1_6"/>
<dbReference type="Proteomes" id="UP000002157">
    <property type="component" value="Chromosome"/>
</dbReference>
<dbReference type="GO" id="GO:0005829">
    <property type="term" value="C:cytosol"/>
    <property type="evidence" value="ECO:0007669"/>
    <property type="project" value="TreeGrafter"/>
</dbReference>
<dbReference type="FunFam" id="2.20.25.10:FF:000002">
    <property type="entry name" value="UPF0434 protein YcaR"/>
    <property type="match status" value="1"/>
</dbReference>
<dbReference type="Gene3D" id="2.20.25.10">
    <property type="match status" value="1"/>
</dbReference>
<dbReference type="HAMAP" id="MF_01187">
    <property type="entry name" value="UPF0434"/>
    <property type="match status" value="1"/>
</dbReference>
<dbReference type="InterPro" id="IPR005651">
    <property type="entry name" value="Trm112-like"/>
</dbReference>
<dbReference type="PANTHER" id="PTHR33505:SF4">
    <property type="entry name" value="PROTEIN PREY, MITOCHONDRIAL"/>
    <property type="match status" value="1"/>
</dbReference>
<dbReference type="PANTHER" id="PTHR33505">
    <property type="entry name" value="ZGC:162634"/>
    <property type="match status" value="1"/>
</dbReference>
<dbReference type="Pfam" id="PF03966">
    <property type="entry name" value="Trm112p"/>
    <property type="match status" value="1"/>
</dbReference>
<dbReference type="SUPFAM" id="SSF158997">
    <property type="entry name" value="Trm112p-like"/>
    <property type="match status" value="1"/>
</dbReference>
<gene>
    <name type="ordered locus">PputGB1_1477</name>
</gene>
<accession>B0KF42</accession>
<comment type="similarity">
    <text evidence="1">Belongs to the UPF0434 family.</text>
</comment>
<sequence length="61" mass="6642">MDTKLLDILACPITKGPLKLSADKTELISKGAGLAYPIRDGIPVMLESEARTLTDDERLDK</sequence>
<organism>
    <name type="scientific">Pseudomonas putida (strain GB-1)</name>
    <dbReference type="NCBI Taxonomy" id="76869"/>
    <lineage>
        <taxon>Bacteria</taxon>
        <taxon>Pseudomonadati</taxon>
        <taxon>Pseudomonadota</taxon>
        <taxon>Gammaproteobacteria</taxon>
        <taxon>Pseudomonadales</taxon>
        <taxon>Pseudomonadaceae</taxon>
        <taxon>Pseudomonas</taxon>
    </lineage>
</organism>
<proteinExistence type="inferred from homology"/>